<accession>Q00055</accession>
<accession>A5YWB0</accession>
<accession>D6VRW8</accession>
<accession>Q6J5J2</accession>
<accession>Q6J5J5</accession>
<gene>
    <name type="primary">GPD1</name>
    <name type="synonym">DAR1</name>
    <name type="synonym">HOR1</name>
    <name type="synonym">OSG1</name>
    <name type="ordered locus">YDL022W</name>
    <name type="ORF">D2830</name>
</gene>
<evidence type="ECO:0000250" key="1">
    <source>
        <dbReference type="UniProtKB" id="P21695"/>
    </source>
</evidence>
<evidence type="ECO:0000269" key="2">
    <source>
    </source>
</evidence>
<evidence type="ECO:0000269" key="3">
    <source>
    </source>
</evidence>
<evidence type="ECO:0000269" key="4">
    <source>
    </source>
</evidence>
<evidence type="ECO:0000269" key="5">
    <source>
    </source>
</evidence>
<evidence type="ECO:0000269" key="6">
    <source>
    </source>
</evidence>
<evidence type="ECO:0000269" key="7">
    <source ref="4"/>
</evidence>
<evidence type="ECO:0000269" key="8">
    <source ref="9"/>
</evidence>
<evidence type="ECO:0000305" key="9"/>
<evidence type="ECO:0000305" key="10">
    <source>
    </source>
</evidence>
<evidence type="ECO:0007744" key="11">
    <source>
    </source>
</evidence>
<evidence type="ECO:0007744" key="12">
    <source>
    </source>
</evidence>
<evidence type="ECO:0007744" key="13">
    <source>
    </source>
</evidence>
<evidence type="ECO:0007829" key="14">
    <source>
        <dbReference type="PDB" id="4FGW"/>
    </source>
</evidence>
<organism>
    <name type="scientific">Saccharomyces cerevisiae (strain ATCC 204508 / S288c)</name>
    <name type="common">Baker's yeast</name>
    <dbReference type="NCBI Taxonomy" id="559292"/>
    <lineage>
        <taxon>Eukaryota</taxon>
        <taxon>Fungi</taxon>
        <taxon>Dikarya</taxon>
        <taxon>Ascomycota</taxon>
        <taxon>Saccharomycotina</taxon>
        <taxon>Saccharomycetes</taxon>
        <taxon>Saccharomycetales</taxon>
        <taxon>Saccharomycetaceae</taxon>
        <taxon>Saccharomyces</taxon>
    </lineage>
</organism>
<comment type="function">
    <text evidence="6">Catalyzes the production and accumulation of glycerol during hyperosmotic stress conditions. Glycerol acts as an osmoregulator that prevents loss of water and turgor of the cells.</text>
</comment>
<comment type="catalytic activity">
    <reaction evidence="6">
        <text>sn-glycerol 3-phosphate + NAD(+) = dihydroxyacetone phosphate + NADH + H(+)</text>
        <dbReference type="Rhea" id="RHEA:11092"/>
        <dbReference type="ChEBI" id="CHEBI:15378"/>
        <dbReference type="ChEBI" id="CHEBI:57540"/>
        <dbReference type="ChEBI" id="CHEBI:57597"/>
        <dbReference type="ChEBI" id="CHEBI:57642"/>
        <dbReference type="ChEBI" id="CHEBI:57945"/>
        <dbReference type="EC" id="1.1.1.8"/>
    </reaction>
</comment>
<comment type="subcellular location">
    <subcellularLocation>
        <location evidence="4">Cytoplasm</location>
    </subcellularLocation>
    <subcellularLocation>
        <location evidence="2 4">Peroxisome</location>
    </subcellularLocation>
</comment>
<comment type="induction">
    <text evidence="5 6">By osmotic stress and by methylglyoxal in a HOG pathway-dependent manner.</text>
</comment>
<comment type="miscellaneous">
    <text evidence="3">Present with 807 molecules/cell in log phase SD medium.</text>
</comment>
<comment type="similarity">
    <text evidence="9">Belongs to the NAD-dependent glycerol-3-phosphate dehydrogenase family.</text>
</comment>
<comment type="caution">
    <text evidence="10">Was originally thought to be GUT2, the FAD-dependent glycerol-3-phosphate dehydrogenase.</text>
</comment>
<reference key="1">
    <citation type="journal article" date="1993" name="Mol. Microbiol.">
        <title>A gene encoding sn-glycerol 3-phosphate dehydrogenase (NAD+) complements an osmosensitive mutant of Saccharomyces cerevisiae.</title>
        <authorList>
            <person name="Larsson K."/>
            <person name="Ansell R."/>
            <person name="Eriksson P."/>
            <person name="Adler L."/>
        </authorList>
    </citation>
    <scope>NUCLEOTIDE SEQUENCE [GENOMIC DNA]</scope>
    <scope>PROTEIN SEQUENCE OF 30-49</scope>
</reference>
<reference key="2">
    <citation type="journal article" date="1994" name="Mol. Cell. Biol.">
        <title>GPD1, which encodes glycerol-3-phosphate dehydrogenase, is essential for growth under osmotic stress in Saccharomyces cerevisiae, and its expression is regulated by the high-osmolarity glycerol response pathway.</title>
        <authorList>
            <person name="Albertyn J."/>
            <person name="Hohmann S."/>
            <person name="Thevelein J.M."/>
            <person name="Prior B.A."/>
        </authorList>
    </citation>
    <scope>NUCLEOTIDE SEQUENCE [GENOMIC DNA]</scope>
    <scope>FUNCTION</scope>
    <scope>INDUCTION</scope>
    <scope>CATALYTIC ACTIVITY</scope>
</reference>
<reference key="3">
    <citation type="journal article" date="1994" name="J. Bacteriol.">
        <title>Cloning, sequence, and disruption of the Saccharomyces diastaticus DAR1 gene encoding a glycerol-3-phosphate dehydrogenase.</title>
        <authorList>
            <person name="Wang H.T."/>
            <person name="Rahaim P."/>
            <person name="Robbins P."/>
            <person name="Yocum R.R."/>
        </authorList>
    </citation>
    <scope>NUCLEOTIDE SEQUENCE [GENOMIC DNA]</scope>
    <source>
        <strain>Diastaticus / ATCC 62933 / NRC 5704 / J132b</strain>
    </source>
</reference>
<reference key="4">
    <citation type="submission" date="2004-04" db="EMBL/GenBank/DDBJ databases">
        <title>Research on the mechanism of osmotolerance and thermotolerance of yeast.</title>
        <authorList>
            <person name="Ma X."/>
            <person name="Guo Y."/>
            <person name="Zhang F."/>
            <person name="Yu H."/>
            <person name="Kuang J."/>
            <person name="Yao J."/>
            <person name="Li Z."/>
            <person name="He G."/>
        </authorList>
    </citation>
    <scope>NUCLEOTIDE SEQUENCE [GENOMIC DNA]</scope>
    <scope>VARIANTS ASP-16; ALA-143; PRO-164; SER-183; SER-225 AND VAL-256</scope>
    <source>
        <strain>FHS</strain>
        <strain>WFB</strain>
    </source>
</reference>
<reference key="5">
    <citation type="journal article" date="1997" name="Nature">
        <title>The nucleotide sequence of Saccharomyces cerevisiae chromosome IV.</title>
        <authorList>
            <person name="Jacq C."/>
            <person name="Alt-Moerbe J."/>
            <person name="Andre B."/>
            <person name="Arnold W."/>
            <person name="Bahr A."/>
            <person name="Ballesta J.P.G."/>
            <person name="Bargues M."/>
            <person name="Baron L."/>
            <person name="Becker A."/>
            <person name="Biteau N."/>
            <person name="Bloecker H."/>
            <person name="Blugeon C."/>
            <person name="Boskovic J."/>
            <person name="Brandt P."/>
            <person name="Brueckner M."/>
            <person name="Buitrago M.J."/>
            <person name="Coster F."/>
            <person name="Delaveau T."/>
            <person name="del Rey F."/>
            <person name="Dujon B."/>
            <person name="Eide L.G."/>
            <person name="Garcia-Cantalejo J.M."/>
            <person name="Goffeau A."/>
            <person name="Gomez-Peris A."/>
            <person name="Granotier C."/>
            <person name="Hanemann V."/>
            <person name="Hankeln T."/>
            <person name="Hoheisel J.D."/>
            <person name="Jaeger W."/>
            <person name="Jimenez A."/>
            <person name="Jonniaux J.-L."/>
            <person name="Kraemer C."/>
            <person name="Kuester H."/>
            <person name="Laamanen P."/>
            <person name="Legros Y."/>
            <person name="Louis E.J."/>
            <person name="Moeller-Rieker S."/>
            <person name="Monnet A."/>
            <person name="Moro M."/>
            <person name="Mueller-Auer S."/>
            <person name="Nussbaumer B."/>
            <person name="Paricio N."/>
            <person name="Paulin L."/>
            <person name="Perea J."/>
            <person name="Perez-Alonso M."/>
            <person name="Perez-Ortin J.E."/>
            <person name="Pohl T.M."/>
            <person name="Prydz H."/>
            <person name="Purnelle B."/>
            <person name="Rasmussen S.W."/>
            <person name="Remacha M.A."/>
            <person name="Revuelta J.L."/>
            <person name="Rieger M."/>
            <person name="Salom D."/>
            <person name="Saluz H.P."/>
            <person name="Saiz J.E."/>
            <person name="Saren A.-M."/>
            <person name="Schaefer M."/>
            <person name="Scharfe M."/>
            <person name="Schmidt E.R."/>
            <person name="Schneider C."/>
            <person name="Scholler P."/>
            <person name="Schwarz S."/>
            <person name="Soler-Mira A."/>
            <person name="Urrestarazu L.A."/>
            <person name="Verhasselt P."/>
            <person name="Vissers S."/>
            <person name="Voet M."/>
            <person name="Volckaert G."/>
            <person name="Wagner G."/>
            <person name="Wambutt R."/>
            <person name="Wedler E."/>
            <person name="Wedler H."/>
            <person name="Woelfl S."/>
            <person name="Harris D.E."/>
            <person name="Bowman S."/>
            <person name="Brown D."/>
            <person name="Churcher C.M."/>
            <person name="Connor R."/>
            <person name="Dedman K."/>
            <person name="Gentles S."/>
            <person name="Hamlin N."/>
            <person name="Hunt S."/>
            <person name="Jones L."/>
            <person name="McDonald S."/>
            <person name="Murphy L.D."/>
            <person name="Niblett D."/>
            <person name="Odell C."/>
            <person name="Oliver K."/>
            <person name="Rajandream M.A."/>
            <person name="Richards C."/>
            <person name="Shore L."/>
            <person name="Walsh S.V."/>
            <person name="Barrell B.G."/>
            <person name="Dietrich F.S."/>
            <person name="Mulligan J.T."/>
            <person name="Allen E."/>
            <person name="Araujo R."/>
            <person name="Aviles E."/>
            <person name="Berno A."/>
            <person name="Carpenter J."/>
            <person name="Chen E."/>
            <person name="Cherry J.M."/>
            <person name="Chung E."/>
            <person name="Duncan M."/>
            <person name="Hunicke-Smith S."/>
            <person name="Hyman R.W."/>
            <person name="Komp C."/>
            <person name="Lashkari D."/>
            <person name="Lew H."/>
            <person name="Lin D."/>
            <person name="Mosedale D."/>
            <person name="Nakahara K."/>
            <person name="Namath A."/>
            <person name="Oefner P."/>
            <person name="Oh C."/>
            <person name="Petel F.X."/>
            <person name="Roberts D."/>
            <person name="Schramm S."/>
            <person name="Schroeder M."/>
            <person name="Shogren T."/>
            <person name="Shroff N."/>
            <person name="Winant A."/>
            <person name="Yelton M.A."/>
            <person name="Botstein D."/>
            <person name="Davis R.W."/>
            <person name="Johnston M."/>
            <person name="Andrews S."/>
            <person name="Brinkman R."/>
            <person name="Cooper J."/>
            <person name="Ding H."/>
            <person name="Du Z."/>
            <person name="Favello A."/>
            <person name="Fulton L."/>
            <person name="Gattung S."/>
            <person name="Greco T."/>
            <person name="Hallsworth K."/>
            <person name="Hawkins J."/>
            <person name="Hillier L.W."/>
            <person name="Jier M."/>
            <person name="Johnson D."/>
            <person name="Johnston L."/>
            <person name="Kirsten J."/>
            <person name="Kucaba T."/>
            <person name="Langston Y."/>
            <person name="Latreille P."/>
            <person name="Le T."/>
            <person name="Mardis E."/>
            <person name="Menezes S."/>
            <person name="Miller N."/>
            <person name="Nhan M."/>
            <person name="Pauley A."/>
            <person name="Peluso D."/>
            <person name="Rifkin L."/>
            <person name="Riles L."/>
            <person name="Taich A."/>
            <person name="Trevaskis E."/>
            <person name="Vignati D."/>
            <person name="Wilcox L."/>
            <person name="Wohldman P."/>
            <person name="Vaudin M."/>
            <person name="Wilson R."/>
            <person name="Waterston R."/>
            <person name="Albermann K."/>
            <person name="Hani J."/>
            <person name="Heumann K."/>
            <person name="Kleine K."/>
            <person name="Mewes H.-W."/>
            <person name="Zollner A."/>
            <person name="Zaccaria P."/>
        </authorList>
    </citation>
    <scope>NUCLEOTIDE SEQUENCE [LARGE SCALE GENOMIC DNA]</scope>
    <source>
        <strain>ATCC 204508 / S288c</strain>
    </source>
</reference>
<reference key="6">
    <citation type="journal article" date="2014" name="G3 (Bethesda)">
        <title>The reference genome sequence of Saccharomyces cerevisiae: Then and now.</title>
        <authorList>
            <person name="Engel S.R."/>
            <person name="Dietrich F.S."/>
            <person name="Fisk D.G."/>
            <person name="Binkley G."/>
            <person name="Balakrishnan R."/>
            <person name="Costanzo M.C."/>
            <person name="Dwight S.S."/>
            <person name="Hitz B.C."/>
            <person name="Karra K."/>
            <person name="Nash R.S."/>
            <person name="Weng S."/>
            <person name="Wong E.D."/>
            <person name="Lloyd P."/>
            <person name="Skrzypek M.S."/>
            <person name="Miyasato S.R."/>
            <person name="Simison M."/>
            <person name="Cherry J.M."/>
        </authorList>
    </citation>
    <scope>GENOME REANNOTATION</scope>
    <source>
        <strain>ATCC 204508 / S288c</strain>
    </source>
</reference>
<reference key="7">
    <citation type="submission" date="2007-05" db="EMBL/GenBank/DDBJ databases">
        <title>The effects of co-expression of ScGPD1 and AtNHX1 on the salt tolerance of yeast.</title>
        <authorList>
            <person name="Fu C."/>
            <person name="Zheng D."/>
        </authorList>
    </citation>
    <scope>NUCLEOTIDE SEQUENCE [GENOMIC DNA]</scope>
</reference>
<reference key="8">
    <citation type="journal article" date="1991" name="Gene">
        <title>Cloning and characterisation of the Saccharomyces cerevisiae glycerol-3-phosphate dehydrogenase (GUT2) promoter.</title>
        <authorList>
            <person name="Sleep D."/>
            <person name="Ogden J.E."/>
            <person name="Roberts N.A."/>
            <person name="Goodey A.R."/>
        </authorList>
    </citation>
    <scope>NUCLEOTIDE SEQUENCE [GENOMIC DNA] OF 1-107</scope>
</reference>
<reference key="9">
    <citation type="submission" date="2005-06" db="UniProtKB">
        <authorList>
            <person name="Bienvenut W.V."/>
            <person name="Peters C."/>
        </authorList>
    </citation>
    <scope>PROTEIN SEQUENCE OF 2-19 AND 271-278</scope>
    <scope>CLEAVAGE OF INITIATOR METHIONINE</scope>
    <scope>ACETYLATION AT SER-2</scope>
    <scope>IDENTIFICATION BY MASS SPECTROMETRY</scope>
</reference>
<reference key="10">
    <citation type="journal article" date="1996" name="FEMS Microbiol. Lett.">
        <title>Protein expression during exponential growth in 0.7 M NaCl medium of Saccharomyces cerevisiae.</title>
        <authorList>
            <person name="Norbeck J."/>
            <person name="Blomberg A."/>
        </authorList>
    </citation>
    <scope>PROTEIN SEQUENCE OF 8-16; 95-108 AND 160-173</scope>
    <source>
        <strain>ATCC 38531 / Y41</strain>
    </source>
</reference>
<reference key="11">
    <citation type="journal article" date="2003" name="Nature">
        <title>Global analysis of protein localization in budding yeast.</title>
        <authorList>
            <person name="Huh W.-K."/>
            <person name="Falvo J.V."/>
            <person name="Gerke L.C."/>
            <person name="Carroll A.S."/>
            <person name="Howson R.W."/>
            <person name="Weissman J.S."/>
            <person name="O'Shea E.K."/>
        </authorList>
    </citation>
    <scope>SUBCELLULAR LOCATION [LARGE SCALE ANALYSIS]</scope>
</reference>
<reference key="12">
    <citation type="journal article" date="2003" name="Nature">
        <title>Global analysis of protein expression in yeast.</title>
        <authorList>
            <person name="Ghaemmaghami S."/>
            <person name="Huh W.-K."/>
            <person name="Bower K."/>
            <person name="Howson R.W."/>
            <person name="Belle A."/>
            <person name="Dephoure N."/>
            <person name="O'Shea E.K."/>
            <person name="Weissman J.S."/>
        </authorList>
    </citation>
    <scope>LEVEL OF PROTEIN EXPRESSION [LARGE SCALE ANALYSIS]</scope>
</reference>
<reference key="13">
    <citation type="journal article" date="2004" name="J. Biol. Chem.">
        <title>Distinct intracellular localization of Gpd1p and Gpd2p, the two yeast isoforms of NAD+-dependent glycerol-3-phosphate dehydrogenase, explains their different contributions to redox-driven glycerol production.</title>
        <authorList>
            <person name="Valadi A."/>
            <person name="Granath K."/>
            <person name="Gustafsson L."/>
            <person name="Adler L."/>
        </authorList>
    </citation>
    <scope>SUBCELLULAR LOCATION</scope>
</reference>
<reference key="14">
    <citation type="journal article" date="2005" name="Mol. Cell. Proteomics">
        <title>Quantitative phosphoproteomics applied to the yeast pheromone signaling pathway.</title>
        <authorList>
            <person name="Gruhler A."/>
            <person name="Olsen J.V."/>
            <person name="Mohammed S."/>
            <person name="Mortensen P."/>
            <person name="Faergeman N.J."/>
            <person name="Mann M."/>
            <person name="Jensen O.N."/>
        </authorList>
    </citation>
    <scope>PHOSPHORYLATION [LARGE SCALE ANALYSIS] AT SER-27</scope>
    <scope>IDENTIFICATION BY MASS SPECTROMETRY [LARGE SCALE ANALYSIS]</scope>
    <source>
        <strain>YAL6B</strain>
    </source>
</reference>
<reference key="15">
    <citation type="journal article" date="2005" name="Mol. Microbiol.">
        <title>The HOG MAP kinase pathway is required for the induction of methylglyoxal-responsive genes and determines methylglyoxal resistance in Saccharomyces cerevisiae.</title>
        <authorList>
            <person name="Aguilera J."/>
            <person name="Rodriguez-Vargas S."/>
            <person name="Prieto J.A."/>
        </authorList>
    </citation>
    <scope>INDUCTION</scope>
</reference>
<reference key="16">
    <citation type="journal article" date="2007" name="J. Proteome Res.">
        <title>Large-scale phosphorylation analysis of alpha-factor-arrested Saccharomyces cerevisiae.</title>
        <authorList>
            <person name="Li X."/>
            <person name="Gerber S.A."/>
            <person name="Rudner A.D."/>
            <person name="Beausoleil S.A."/>
            <person name="Haas W."/>
            <person name="Villen J."/>
            <person name="Elias J.E."/>
            <person name="Gygi S.P."/>
        </authorList>
    </citation>
    <scope>PHOSPHORYLATION [LARGE SCALE ANALYSIS] AT SER-24 AND SER-27</scope>
    <scope>IDENTIFICATION BY MASS SPECTROMETRY [LARGE SCALE ANALYSIS]</scope>
    <source>
        <strain>ADR376</strain>
    </source>
</reference>
<reference key="17">
    <citation type="journal article" date="2008" name="Mol. Cell. Proteomics">
        <title>A multidimensional chromatography technology for in-depth phosphoproteome analysis.</title>
        <authorList>
            <person name="Albuquerque C.P."/>
            <person name="Smolka M.B."/>
            <person name="Payne S.H."/>
            <person name="Bafna V."/>
            <person name="Eng J."/>
            <person name="Zhou H."/>
        </authorList>
    </citation>
    <scope>IDENTIFICATION BY MASS SPECTROMETRY [LARGE SCALE ANALYSIS]</scope>
</reference>
<reference key="18">
    <citation type="journal article" date="2009" name="Science">
        <title>Global analysis of Cdk1 substrate phosphorylation sites provides insights into evolution.</title>
        <authorList>
            <person name="Holt L.J."/>
            <person name="Tuch B.B."/>
            <person name="Villen J."/>
            <person name="Johnson A.D."/>
            <person name="Gygi S.P."/>
            <person name="Morgan D.O."/>
        </authorList>
    </citation>
    <scope>PHOSPHORYLATION [LARGE SCALE ANALYSIS] AT SER-27</scope>
    <scope>IDENTIFICATION BY MASS SPECTROMETRY [LARGE SCALE ANALYSIS]</scope>
</reference>
<feature type="initiator methionine" description="Removed" evidence="8">
    <location>
        <position position="1"/>
    </location>
</feature>
<feature type="chain" id="PRO_0000138100" description="Glycerol-3-phosphate dehydrogenase [NAD(+)] 1">
    <location>
        <begin position="2"/>
        <end position="391"/>
    </location>
</feature>
<feature type="active site" description="Proton acceptor" evidence="1">
    <location>
        <position position="245"/>
    </location>
</feature>
<feature type="binding site" evidence="1">
    <location>
        <begin position="41"/>
        <end position="46"/>
    </location>
    <ligand>
        <name>NAD(+)</name>
        <dbReference type="ChEBI" id="CHEBI:57540"/>
    </ligand>
</feature>
<feature type="binding site" evidence="1">
    <location>
        <position position="73"/>
    </location>
    <ligand>
        <name>NAD(+)</name>
        <dbReference type="ChEBI" id="CHEBI:57540"/>
    </ligand>
</feature>
<feature type="binding site" evidence="1">
    <location>
        <position position="129"/>
    </location>
    <ligand>
        <name>NAD(+)</name>
        <dbReference type="ChEBI" id="CHEBI:57540"/>
    </ligand>
</feature>
<feature type="binding site" evidence="1">
    <location>
        <position position="152"/>
    </location>
    <ligand>
        <name>substrate</name>
    </ligand>
</feature>
<feature type="binding site" evidence="1">
    <location>
        <position position="185"/>
    </location>
    <ligand>
        <name>NAD(+)</name>
        <dbReference type="ChEBI" id="CHEBI:57540"/>
    </ligand>
</feature>
<feature type="binding site" evidence="1">
    <location>
        <begin position="310"/>
        <end position="311"/>
    </location>
    <ligand>
        <name>substrate</name>
    </ligand>
</feature>
<feature type="binding site" evidence="1">
    <location>
        <position position="310"/>
    </location>
    <ligand>
        <name>NAD(+)</name>
        <dbReference type="ChEBI" id="CHEBI:57540"/>
    </ligand>
</feature>
<feature type="binding site" evidence="1">
    <location>
        <position position="339"/>
    </location>
    <ligand>
        <name>NAD(+)</name>
        <dbReference type="ChEBI" id="CHEBI:57540"/>
    </ligand>
</feature>
<feature type="modified residue" description="N-acetylserine" evidence="8">
    <location>
        <position position="2"/>
    </location>
</feature>
<feature type="modified residue" description="Phosphoserine" evidence="12">
    <location>
        <position position="24"/>
    </location>
</feature>
<feature type="modified residue" description="Phosphoserine" evidence="11 12 13">
    <location>
        <position position="27"/>
    </location>
</feature>
<feature type="sequence variant" description="In strain: WFB." evidence="7">
    <original>N</original>
    <variation>D</variation>
    <location>
        <position position="16"/>
    </location>
</feature>
<feature type="sequence variant" description="In strain: WFB." evidence="7">
    <original>S</original>
    <variation>A</variation>
    <location>
        <position position="143"/>
    </location>
</feature>
<feature type="sequence variant" description="In strain: WFB." evidence="7">
    <original>L</original>
    <variation>P</variation>
    <location>
        <position position="164"/>
    </location>
</feature>
<feature type="sequence variant" description="In strain: WFB." evidence="7">
    <original>N</original>
    <variation>S</variation>
    <location>
        <position position="183"/>
    </location>
</feature>
<feature type="sequence variant" description="In strain: WFB." evidence="7">
    <original>P</original>
    <variation>S</variation>
    <location>
        <position position="225"/>
    </location>
</feature>
<feature type="sequence variant" description="In strain: WFB." evidence="7">
    <original>E</original>
    <variation>V</variation>
    <location>
        <position position="256"/>
    </location>
</feature>
<feature type="sequence conflict" description="In Ref. 8; AAA18631." evidence="9" ref="8">
    <original>DNLVA</original>
    <variation>TIWLL</variation>
    <location>
        <begin position="103"/>
        <end position="107"/>
    </location>
</feature>
<feature type="strand" evidence="14">
    <location>
        <begin position="35"/>
        <end position="40"/>
    </location>
</feature>
<feature type="helix" evidence="14">
    <location>
        <begin position="44"/>
        <end position="59"/>
    </location>
</feature>
<feature type="turn" evidence="14">
    <location>
        <begin position="61"/>
        <end position="63"/>
    </location>
</feature>
<feature type="strand" evidence="14">
    <location>
        <begin position="64"/>
        <end position="71"/>
    </location>
</feature>
<feature type="strand" evidence="14">
    <location>
        <begin position="76"/>
        <end position="79"/>
    </location>
</feature>
<feature type="helix" evidence="14">
    <location>
        <begin position="82"/>
        <end position="86"/>
    </location>
</feature>
<feature type="turn" evidence="14">
    <location>
        <begin position="87"/>
        <end position="89"/>
    </location>
</feature>
<feature type="turn" evidence="14">
    <location>
        <begin position="93"/>
        <end position="95"/>
    </location>
</feature>
<feature type="strand" evidence="14">
    <location>
        <begin position="103"/>
        <end position="109"/>
    </location>
</feature>
<feature type="helix" evidence="14">
    <location>
        <begin position="111"/>
        <end position="115"/>
    </location>
</feature>
<feature type="strand" evidence="14">
    <location>
        <begin position="119"/>
        <end position="123"/>
    </location>
</feature>
<feature type="helix" evidence="14">
    <location>
        <begin position="127"/>
        <end position="129"/>
    </location>
</feature>
<feature type="helix" evidence="14">
    <location>
        <begin position="130"/>
        <end position="137"/>
    </location>
</feature>
<feature type="turn" evidence="14">
    <location>
        <begin position="138"/>
        <end position="140"/>
    </location>
</feature>
<feature type="strand" evidence="14">
    <location>
        <begin position="146"/>
        <end position="149"/>
    </location>
</feature>
<feature type="strand" evidence="14">
    <location>
        <begin position="155"/>
        <end position="157"/>
    </location>
</feature>
<feature type="strand" evidence="14">
    <location>
        <begin position="160"/>
        <end position="162"/>
    </location>
</feature>
<feature type="helix" evidence="14">
    <location>
        <begin position="164"/>
        <end position="172"/>
    </location>
</feature>
<feature type="strand" evidence="14">
    <location>
        <begin position="175"/>
        <end position="180"/>
    </location>
</feature>
<feature type="helix" evidence="14">
    <location>
        <begin position="185"/>
        <end position="189"/>
    </location>
</feature>
<feature type="strand" evidence="14">
    <location>
        <begin position="194"/>
        <end position="199"/>
    </location>
</feature>
<feature type="strand" evidence="14">
    <location>
        <begin position="209"/>
        <end position="212"/>
    </location>
</feature>
<feature type="helix" evidence="14">
    <location>
        <begin position="215"/>
        <end position="222"/>
    </location>
</feature>
<feature type="strand" evidence="14">
    <location>
        <begin position="227"/>
        <end position="233"/>
    </location>
</feature>
<feature type="helix" evidence="14">
    <location>
        <begin position="235"/>
        <end position="257"/>
    </location>
</feature>
<feature type="helix" evidence="14">
    <location>
        <begin position="261"/>
        <end position="283"/>
    </location>
</feature>
<feature type="helix" evidence="14">
    <location>
        <begin position="289"/>
        <end position="294"/>
    </location>
</feature>
<feature type="turn" evidence="14">
    <location>
        <begin position="296"/>
        <end position="298"/>
    </location>
</feature>
<feature type="helix" evidence="14">
    <location>
        <begin position="299"/>
        <end position="307"/>
    </location>
</feature>
<feature type="helix" evidence="14">
    <location>
        <begin position="310"/>
        <end position="320"/>
    </location>
</feature>
<feature type="helix" evidence="14">
    <location>
        <begin position="325"/>
        <end position="333"/>
    </location>
</feature>
<feature type="helix" evidence="14">
    <location>
        <begin position="340"/>
        <end position="354"/>
    </location>
</feature>
<feature type="helix" evidence="14">
    <location>
        <begin position="361"/>
        <end position="371"/>
    </location>
</feature>
<feature type="helix" evidence="14">
    <location>
        <begin position="379"/>
        <end position="383"/>
    </location>
</feature>
<sequence length="391" mass="42869">MSAAADRLNLTSGHLNAGRKRSSSSVSLKAAEKPFKVTVIGSGNWGTTIAKVVAENCKGYPEVFAPIVQMWVFEEEINGEKLTEIINTRHQNVKYLPGITLPDNLVANPDLIDSVKDVDIIVFNIPHQFLPRICSQLKGHVDSHVRAISCLKGFEVGAKGVQLLSSYITEELGIQCGALSGANIATEVAQEHWSETTVAYHIPKDFRGEGKDVDHKVLKALFHRPYFHVSVIEDVAGISICGALKNVVALGCGFVEGLGWGNNASAAIQRVGLGEIIRFGQMFFPESREETYYQESAGVADLITTCAGGRNVKVARLMATSGKDAWECEKELLNGQSAQGLITCKEVHEWLETCGSVEDFPLFEAVYQIVYNNYPMKNLPDMIEELDLHED</sequence>
<dbReference type="EC" id="1.1.1.8" evidence="6"/>
<dbReference type="EMBL" id="Z24454">
    <property type="protein sequence ID" value="CAA80827.1"/>
    <property type="molecule type" value="Genomic_DNA"/>
</dbReference>
<dbReference type="EMBL" id="X76859">
    <property type="protein sequence ID" value="CAA54189.1"/>
    <property type="molecule type" value="Genomic_DNA"/>
</dbReference>
<dbReference type="EMBL" id="U04621">
    <property type="protein sequence ID" value="AAA64936.1"/>
    <property type="molecule type" value="Genomic_DNA"/>
</dbReference>
<dbReference type="EMBL" id="AY598965">
    <property type="protein sequence ID" value="AAT27375.1"/>
    <property type="molecule type" value="Genomic_DNA"/>
</dbReference>
<dbReference type="EMBL" id="AY598968">
    <property type="protein sequence ID" value="AAT27378.1"/>
    <property type="molecule type" value="Genomic_DNA"/>
</dbReference>
<dbReference type="EMBL" id="Z48432">
    <property type="protein sequence ID" value="CAA88337.1"/>
    <property type="molecule type" value="Genomic_DNA"/>
</dbReference>
<dbReference type="EMBL" id="Z74071">
    <property type="protein sequence ID" value="CAA98582.1"/>
    <property type="molecule type" value="Genomic_DNA"/>
</dbReference>
<dbReference type="EMBL" id="EF596737">
    <property type="protein sequence ID" value="ABQ58864.1"/>
    <property type="molecule type" value="Genomic_DNA"/>
</dbReference>
<dbReference type="EMBL" id="M38740">
    <property type="protein sequence ID" value="AAA18631.1"/>
    <property type="molecule type" value="Genomic_DNA"/>
</dbReference>
<dbReference type="EMBL" id="BK006938">
    <property type="protein sequence ID" value="DAA11828.1"/>
    <property type="molecule type" value="Genomic_DNA"/>
</dbReference>
<dbReference type="PIR" id="S40059">
    <property type="entry name" value="S40059"/>
</dbReference>
<dbReference type="RefSeq" id="NP_010262.1">
    <property type="nucleotide sequence ID" value="NM_001180081.1"/>
</dbReference>
<dbReference type="PDB" id="4FGW">
    <property type="method" value="X-ray"/>
    <property type="resolution" value="2.45 A"/>
    <property type="chains" value="A/B=1-391"/>
</dbReference>
<dbReference type="PDBsum" id="4FGW"/>
<dbReference type="SMR" id="Q00055"/>
<dbReference type="BioGRID" id="32033">
    <property type="interactions" value="161"/>
</dbReference>
<dbReference type="DIP" id="DIP-6393N"/>
<dbReference type="FunCoup" id="Q00055">
    <property type="interactions" value="795"/>
</dbReference>
<dbReference type="IntAct" id="Q00055">
    <property type="interactions" value="12"/>
</dbReference>
<dbReference type="MINT" id="Q00055"/>
<dbReference type="STRING" id="4932.YDL022W"/>
<dbReference type="GlyGen" id="Q00055">
    <property type="glycosylation" value="2 sites, 1 O-linked glycan (2 sites)"/>
</dbReference>
<dbReference type="iPTMnet" id="Q00055"/>
<dbReference type="PaxDb" id="4932-YDL022W"/>
<dbReference type="PeptideAtlas" id="Q00055"/>
<dbReference type="TopDownProteomics" id="Q00055"/>
<dbReference type="EnsemblFungi" id="YDL022W_mRNA">
    <property type="protein sequence ID" value="YDL022W"/>
    <property type="gene ID" value="YDL022W"/>
</dbReference>
<dbReference type="GeneID" id="851539"/>
<dbReference type="KEGG" id="sce:YDL022W"/>
<dbReference type="AGR" id="SGD:S000002180"/>
<dbReference type="SGD" id="S000002180">
    <property type="gene designation" value="GPD1"/>
</dbReference>
<dbReference type="VEuPathDB" id="FungiDB:YDL022W"/>
<dbReference type="eggNOG" id="KOG2711">
    <property type="taxonomic scope" value="Eukaryota"/>
</dbReference>
<dbReference type="GeneTree" id="ENSGT00390000003114"/>
<dbReference type="HOGENOM" id="CLU_033449_2_2_1"/>
<dbReference type="InParanoid" id="Q00055"/>
<dbReference type="OMA" id="YDTPPMD"/>
<dbReference type="OrthoDB" id="10263760at2759"/>
<dbReference type="BioCyc" id="MetaCyc:YDL022W-MONOMER"/>
<dbReference type="BioCyc" id="YEAST:YDL022W-MONOMER"/>
<dbReference type="BRENDA" id="1.1.1.8">
    <property type="organism ID" value="984"/>
</dbReference>
<dbReference type="Reactome" id="R-SCE-1483166">
    <property type="pathway name" value="Synthesis of PA"/>
</dbReference>
<dbReference type="BioGRID-ORCS" id="851539">
    <property type="hits" value="5 hits in 10 CRISPR screens"/>
</dbReference>
<dbReference type="ChiTaRS" id="GPD1">
    <property type="organism name" value="yeast"/>
</dbReference>
<dbReference type="EvolutionaryTrace" id="Q00055"/>
<dbReference type="PRO" id="PR:Q00055"/>
<dbReference type="Proteomes" id="UP000002311">
    <property type="component" value="Chromosome IV"/>
</dbReference>
<dbReference type="RNAct" id="Q00055">
    <property type="molecule type" value="protein"/>
</dbReference>
<dbReference type="GO" id="GO:0005829">
    <property type="term" value="C:cytosol"/>
    <property type="evidence" value="ECO:0000314"/>
    <property type="project" value="SGD"/>
</dbReference>
<dbReference type="GO" id="GO:0005739">
    <property type="term" value="C:mitochondrion"/>
    <property type="evidence" value="ECO:0007005"/>
    <property type="project" value="SGD"/>
</dbReference>
<dbReference type="GO" id="GO:0005634">
    <property type="term" value="C:nucleus"/>
    <property type="evidence" value="ECO:0000314"/>
    <property type="project" value="SGD"/>
</dbReference>
<dbReference type="GO" id="GO:0005777">
    <property type="term" value="C:peroxisome"/>
    <property type="evidence" value="ECO:0000314"/>
    <property type="project" value="SGD"/>
</dbReference>
<dbReference type="GO" id="GO:0141152">
    <property type="term" value="F:glycerol-3-phosphate dehydrogenase (NAD+) activity"/>
    <property type="evidence" value="ECO:0007669"/>
    <property type="project" value="UniProtKB-EC"/>
</dbReference>
<dbReference type="GO" id="GO:0047952">
    <property type="term" value="F:glycerol-3-phosphate dehydrogenase [NAD(P)+] activity"/>
    <property type="evidence" value="ECO:0000315"/>
    <property type="project" value="SGD"/>
</dbReference>
<dbReference type="GO" id="GO:0051287">
    <property type="term" value="F:NAD binding"/>
    <property type="evidence" value="ECO:0007669"/>
    <property type="project" value="InterPro"/>
</dbReference>
<dbReference type="GO" id="GO:0042803">
    <property type="term" value="F:protein homodimerization activity"/>
    <property type="evidence" value="ECO:0007669"/>
    <property type="project" value="InterPro"/>
</dbReference>
<dbReference type="GO" id="GO:0005975">
    <property type="term" value="P:carbohydrate metabolic process"/>
    <property type="evidence" value="ECO:0007669"/>
    <property type="project" value="InterPro"/>
</dbReference>
<dbReference type="GO" id="GO:0046168">
    <property type="term" value="P:glycerol-3-phosphate catabolic process"/>
    <property type="evidence" value="ECO:0007669"/>
    <property type="project" value="InterPro"/>
</dbReference>
<dbReference type="GO" id="GO:0006072">
    <property type="term" value="P:glycerol-3-phosphate metabolic process"/>
    <property type="evidence" value="ECO:0000318"/>
    <property type="project" value="GO_Central"/>
</dbReference>
<dbReference type="GO" id="GO:0006973">
    <property type="term" value="P:intracellular accumulation of glycerol"/>
    <property type="evidence" value="ECO:0000315"/>
    <property type="project" value="SGD"/>
</dbReference>
<dbReference type="GO" id="GO:0016558">
    <property type="term" value="P:protein import into peroxisome matrix"/>
    <property type="evidence" value="ECO:0000315"/>
    <property type="project" value="SGD"/>
</dbReference>
<dbReference type="FunFam" id="1.10.1040.10:FF:000004">
    <property type="entry name" value="Glycerol-3-phosphate dehydrogenase [NAD(+)]"/>
    <property type="match status" value="1"/>
</dbReference>
<dbReference type="FunFam" id="3.40.50.720:FF:000294">
    <property type="entry name" value="Glycerol-3-phosphate dehydrogenase [NAD(+)]"/>
    <property type="match status" value="1"/>
</dbReference>
<dbReference type="Gene3D" id="1.10.1040.10">
    <property type="entry name" value="N-(1-d-carboxylethyl)-l-norvaline Dehydrogenase, domain 2"/>
    <property type="match status" value="1"/>
</dbReference>
<dbReference type="Gene3D" id="3.40.50.720">
    <property type="entry name" value="NAD(P)-binding Rossmann-like Domain"/>
    <property type="match status" value="1"/>
</dbReference>
<dbReference type="InterPro" id="IPR008927">
    <property type="entry name" value="6-PGluconate_DH-like_C_sf"/>
</dbReference>
<dbReference type="InterPro" id="IPR013328">
    <property type="entry name" value="6PGD_dom2"/>
</dbReference>
<dbReference type="InterPro" id="IPR006168">
    <property type="entry name" value="G3P_DH_NAD-dep"/>
</dbReference>
<dbReference type="InterPro" id="IPR006109">
    <property type="entry name" value="G3P_DH_NAD-dep_C"/>
</dbReference>
<dbReference type="InterPro" id="IPR017751">
    <property type="entry name" value="G3P_DH_NAD-dep_euk"/>
</dbReference>
<dbReference type="InterPro" id="IPR011128">
    <property type="entry name" value="G3P_DH_NAD-dep_N"/>
</dbReference>
<dbReference type="InterPro" id="IPR036291">
    <property type="entry name" value="NAD(P)-bd_dom_sf"/>
</dbReference>
<dbReference type="NCBIfam" id="TIGR03376">
    <property type="entry name" value="glycerol3P_DH"/>
    <property type="match status" value="1"/>
</dbReference>
<dbReference type="PANTHER" id="PTHR11728">
    <property type="entry name" value="GLYCEROL-3-PHOSPHATE DEHYDROGENASE"/>
    <property type="match status" value="1"/>
</dbReference>
<dbReference type="PANTHER" id="PTHR11728:SF8">
    <property type="entry name" value="GLYCEROL-3-PHOSPHATE DEHYDROGENASE [NAD(+)]-RELATED"/>
    <property type="match status" value="1"/>
</dbReference>
<dbReference type="Pfam" id="PF07479">
    <property type="entry name" value="NAD_Gly3P_dh_C"/>
    <property type="match status" value="1"/>
</dbReference>
<dbReference type="Pfam" id="PF01210">
    <property type="entry name" value="NAD_Gly3P_dh_N"/>
    <property type="match status" value="1"/>
</dbReference>
<dbReference type="PIRSF" id="PIRSF000114">
    <property type="entry name" value="Glycerol-3-P_dh"/>
    <property type="match status" value="1"/>
</dbReference>
<dbReference type="PRINTS" id="PR00077">
    <property type="entry name" value="GPDHDRGNASE"/>
</dbReference>
<dbReference type="SUPFAM" id="SSF48179">
    <property type="entry name" value="6-phosphogluconate dehydrogenase C-terminal domain-like"/>
    <property type="match status" value="1"/>
</dbReference>
<dbReference type="SUPFAM" id="SSF51735">
    <property type="entry name" value="NAD(P)-binding Rossmann-fold domains"/>
    <property type="match status" value="1"/>
</dbReference>
<dbReference type="PROSITE" id="PS00957">
    <property type="entry name" value="NAD_G3PDH"/>
    <property type="match status" value="1"/>
</dbReference>
<name>GPD1_YEAST</name>
<keyword id="KW-0002">3D-structure</keyword>
<keyword id="KW-0007">Acetylation</keyword>
<keyword id="KW-0963">Cytoplasm</keyword>
<keyword id="KW-0903">Direct protein sequencing</keyword>
<keyword id="KW-0520">NAD</keyword>
<keyword id="KW-0560">Oxidoreductase</keyword>
<keyword id="KW-0576">Peroxisome</keyword>
<keyword id="KW-0597">Phosphoprotein</keyword>
<keyword id="KW-1185">Reference proteome</keyword>
<keyword id="KW-0346">Stress response</keyword>
<proteinExistence type="evidence at protein level"/>
<protein>
    <recommendedName>
        <fullName>Glycerol-3-phosphate dehydrogenase [NAD(+)] 1</fullName>
        <ecNumber evidence="6">1.1.1.8</ecNumber>
    </recommendedName>
</protein>